<keyword id="KW-0456">Lyase</keyword>
<keyword id="KW-1185">Reference proteome</keyword>
<keyword id="KW-0786">Thiamine pyrophosphate</keyword>
<organism>
    <name type="scientific">Streptomyces coelicolor (strain ATCC BAA-471 / A3(2) / M145)</name>
    <dbReference type="NCBI Taxonomy" id="100226"/>
    <lineage>
        <taxon>Bacteria</taxon>
        <taxon>Bacillati</taxon>
        <taxon>Actinomycetota</taxon>
        <taxon>Actinomycetes</taxon>
        <taxon>Kitasatosporales</taxon>
        <taxon>Streptomycetaceae</taxon>
        <taxon>Streptomyces</taxon>
        <taxon>Streptomyces albidoflavus group</taxon>
    </lineage>
</organism>
<proteinExistence type="inferred from homology"/>
<evidence type="ECO:0000255" key="1">
    <source>
        <dbReference type="HAMAP-Rule" id="MF_01403"/>
    </source>
</evidence>
<evidence type="ECO:0000305" key="2"/>
<sequence length="796" mass="88176">MSVDTQQAPPEPTDEELAGLDAHWRAANYLAVGQIYLMANPLLTDPLRPEHVKPRLLGHWGTSPGLNLVHTHLNRVIKARDLDALCVWGPGHGGPAVLANAWLEGSYTETYPDITRDAAGMARLFKQFSFPGGVPSHVAPETPGSIHEGGELGYALSHAYGAAFDHPDLVVACVIGDGEAETGPLATSWHSNKFLDPVHDGAVLPILHLNGYKIANPTVLARLPETELDELLRGYGHDPVHVTGDDPAAVHRATARAMDTALDRIAAIQRAAREEGATGRPRWPMIVLRTPKGWTGPAEVDGLPVENTWRAHQVPLSAVRTNPEHLAQLERWLRSYRPEELFDDAGAPRPAVLAAIPEGPRRLGATPYANGGLLLRELPVPPLEKYAVPVGEPGASTHEPTRVLGDLLRDVMAATTDRRDFRLVGPDETASNRLQAVYAATGKAWQERTLPVDEDLDRHGRVMEILSEHTCQGWLEGYLLTGRHGLFSCYEAFVHIVDSMVNQHVKWLRVTRRLPWRAPIASLNYLLTSHVWRQDHNGFSHQEPGFVDHILNKSPEAVRVYLPPDANTLLSVADHALRSRDYVNVIVAGKQPCFDWLTMDQAKAHCARGAGIWDWAGTEDGSREPDVVLACAGDVPTLEILAAAQLIRHHLPELAVRVVNVVDIARLLPSGEHPHGMSDFEYDGLFTADKPVIFAYHGYPWLIHRLAYRRTGHAHLHVRGYKEIGTTTTPFDMVVGNDLDRYRLVMDVIDRVPGLAVRAAAVRQRMEDARQRHHDWIREHGVDLPEVADWTWEAPR</sequence>
<reference key="1">
    <citation type="journal article" date="2002" name="Nature">
        <title>Complete genome sequence of the model actinomycete Streptomyces coelicolor A3(2).</title>
        <authorList>
            <person name="Bentley S.D."/>
            <person name="Chater K.F."/>
            <person name="Cerdeno-Tarraga A.-M."/>
            <person name="Challis G.L."/>
            <person name="Thomson N.R."/>
            <person name="James K.D."/>
            <person name="Harris D.E."/>
            <person name="Quail M.A."/>
            <person name="Kieser H."/>
            <person name="Harper D."/>
            <person name="Bateman A."/>
            <person name="Brown S."/>
            <person name="Chandra G."/>
            <person name="Chen C.W."/>
            <person name="Collins M."/>
            <person name="Cronin A."/>
            <person name="Fraser A."/>
            <person name="Goble A."/>
            <person name="Hidalgo J."/>
            <person name="Hornsby T."/>
            <person name="Howarth S."/>
            <person name="Huang C.-H."/>
            <person name="Kieser T."/>
            <person name="Larke L."/>
            <person name="Murphy L.D."/>
            <person name="Oliver K."/>
            <person name="O'Neil S."/>
            <person name="Rabbinowitsch E."/>
            <person name="Rajandream M.A."/>
            <person name="Rutherford K.M."/>
            <person name="Rutter S."/>
            <person name="Seeger K."/>
            <person name="Saunders D."/>
            <person name="Sharp S."/>
            <person name="Squares R."/>
            <person name="Squares S."/>
            <person name="Taylor K."/>
            <person name="Warren T."/>
            <person name="Wietzorrek A."/>
            <person name="Woodward J.R."/>
            <person name="Barrell B.G."/>
            <person name="Parkhill J."/>
            <person name="Hopwood D.A."/>
        </authorList>
    </citation>
    <scope>NUCLEOTIDE SEQUENCE [LARGE SCALE GENOMIC DNA]</scope>
    <source>
        <strain>ATCC BAA-471 / A3(2) / M145</strain>
    </source>
</reference>
<feature type="chain" id="PRO_0000193891" description="Probable phosphoketolase">
    <location>
        <begin position="1"/>
        <end position="796"/>
    </location>
</feature>
<dbReference type="EC" id="4.1.2.-" evidence="1"/>
<dbReference type="EMBL" id="AL939106">
    <property type="protein sequence ID" value="CAD55268.1"/>
    <property type="status" value="ALT_INIT"/>
    <property type="molecule type" value="Genomic_DNA"/>
</dbReference>
<dbReference type="RefSeq" id="NP_733508.1">
    <property type="nucleotide sequence ID" value="NC_003888.3"/>
</dbReference>
<dbReference type="SMR" id="Q8CK51"/>
<dbReference type="STRING" id="100226.gene:17758200"/>
<dbReference type="PaxDb" id="100226-SCO0617"/>
<dbReference type="KEGG" id="sco:SCO0617"/>
<dbReference type="PATRIC" id="fig|100226.15.peg.598"/>
<dbReference type="eggNOG" id="COG3957">
    <property type="taxonomic scope" value="Bacteria"/>
</dbReference>
<dbReference type="HOGENOM" id="CLU_013954_2_0_11"/>
<dbReference type="InParanoid" id="Q8CK51"/>
<dbReference type="OrthoDB" id="9768449at2"/>
<dbReference type="PhylomeDB" id="Q8CK51"/>
<dbReference type="Proteomes" id="UP000001973">
    <property type="component" value="Chromosome"/>
</dbReference>
<dbReference type="GO" id="GO:0016832">
    <property type="term" value="F:aldehyde-lyase activity"/>
    <property type="evidence" value="ECO:0007669"/>
    <property type="project" value="UniProtKB-UniRule"/>
</dbReference>
<dbReference type="GO" id="GO:0000287">
    <property type="term" value="F:magnesium ion binding"/>
    <property type="evidence" value="ECO:0007669"/>
    <property type="project" value="UniProtKB-ARBA"/>
</dbReference>
<dbReference type="GO" id="GO:0005975">
    <property type="term" value="P:carbohydrate metabolic process"/>
    <property type="evidence" value="ECO:0007669"/>
    <property type="project" value="InterPro"/>
</dbReference>
<dbReference type="CDD" id="cd02011">
    <property type="entry name" value="TPP_PK"/>
    <property type="match status" value="1"/>
</dbReference>
<dbReference type="Gene3D" id="3.40.50.920">
    <property type="match status" value="1"/>
</dbReference>
<dbReference type="Gene3D" id="3.40.50.970">
    <property type="match status" value="2"/>
</dbReference>
<dbReference type="HAMAP" id="MF_01403">
    <property type="entry name" value="Phosphoketolase"/>
    <property type="match status" value="1"/>
</dbReference>
<dbReference type="InterPro" id="IPR023962">
    <property type="entry name" value="Phosphoketolase"/>
</dbReference>
<dbReference type="InterPro" id="IPR029061">
    <property type="entry name" value="THDP-binding"/>
</dbReference>
<dbReference type="InterPro" id="IPR009014">
    <property type="entry name" value="Transketo_C/PFOR_II"/>
</dbReference>
<dbReference type="InterPro" id="IPR005593">
    <property type="entry name" value="Xul5P/Fru6P_PKetolase"/>
</dbReference>
<dbReference type="InterPro" id="IPR018969">
    <property type="entry name" value="Xul5P/Fru6P_PKetolase_C"/>
</dbReference>
<dbReference type="InterPro" id="IPR019790">
    <property type="entry name" value="Xul5P/Fru6P_PKetolase_CS"/>
</dbReference>
<dbReference type="InterPro" id="IPR018970">
    <property type="entry name" value="Xul5P/Fru6P_PKetolase_N"/>
</dbReference>
<dbReference type="InterPro" id="IPR019789">
    <property type="entry name" value="Xul5P/Fru6P_PKetolase_ThDP_BS"/>
</dbReference>
<dbReference type="NCBIfam" id="NF003617">
    <property type="entry name" value="PRK05261.1-2"/>
    <property type="match status" value="1"/>
</dbReference>
<dbReference type="NCBIfam" id="NF003619">
    <property type="entry name" value="PRK05261.1-4"/>
    <property type="match status" value="1"/>
</dbReference>
<dbReference type="NCBIfam" id="NF003621">
    <property type="entry name" value="PRK05261.1-6"/>
    <property type="match status" value="1"/>
</dbReference>
<dbReference type="PANTHER" id="PTHR31273">
    <property type="entry name" value="PHOSPHOKETOLASE-RELATED"/>
    <property type="match status" value="1"/>
</dbReference>
<dbReference type="PANTHER" id="PTHR31273:SF0">
    <property type="entry name" value="PHOSPHOKETOLASE-RELATED"/>
    <property type="match status" value="1"/>
</dbReference>
<dbReference type="Pfam" id="PF03894">
    <property type="entry name" value="XFP"/>
    <property type="match status" value="1"/>
</dbReference>
<dbReference type="Pfam" id="PF09363">
    <property type="entry name" value="XFP_C"/>
    <property type="match status" value="1"/>
</dbReference>
<dbReference type="Pfam" id="PF09364">
    <property type="entry name" value="XFP_N"/>
    <property type="match status" value="1"/>
</dbReference>
<dbReference type="PIRSF" id="PIRSF017245">
    <property type="entry name" value="Phosphoketolase"/>
    <property type="match status" value="1"/>
</dbReference>
<dbReference type="SUPFAM" id="SSF52518">
    <property type="entry name" value="Thiamin diphosphate-binding fold (THDP-binding)"/>
    <property type="match status" value="2"/>
</dbReference>
<dbReference type="PROSITE" id="PS60002">
    <property type="entry name" value="PHOSPHOKETOLASE_1"/>
    <property type="match status" value="1"/>
</dbReference>
<dbReference type="PROSITE" id="PS60003">
    <property type="entry name" value="PHOSPHOKETOLASE_2"/>
    <property type="match status" value="1"/>
</dbReference>
<protein>
    <recommendedName>
        <fullName evidence="1">Probable phosphoketolase</fullName>
        <ecNumber evidence="1">4.1.2.-</ecNumber>
    </recommendedName>
</protein>
<gene>
    <name type="ordered locus">SCO0617</name>
    <name type="ORF">SCF55.41c</name>
    <name type="ORF">SCF56.01c</name>
</gene>
<name>PHK_STRCO</name>
<accession>Q8CK51</accession>
<comment type="cofactor">
    <cofactor evidence="1">
        <name>thiamine diphosphate</name>
        <dbReference type="ChEBI" id="CHEBI:58937"/>
    </cofactor>
</comment>
<comment type="similarity">
    <text evidence="1">Belongs to the XFP family.</text>
</comment>
<comment type="sequence caution" evidence="2">
    <conflict type="erroneous initiation">
        <sequence resource="EMBL-CDS" id="CAD55268"/>
    </conflict>
</comment>